<name>SYE_XANOR</name>
<keyword id="KW-0002">3D-structure</keyword>
<keyword id="KW-0030">Aminoacyl-tRNA synthetase</keyword>
<keyword id="KW-0067">ATP-binding</keyword>
<keyword id="KW-0963">Cytoplasm</keyword>
<keyword id="KW-0436">Ligase</keyword>
<keyword id="KW-0547">Nucleotide-binding</keyword>
<keyword id="KW-0648">Protein biosynthesis</keyword>
<keyword id="KW-1185">Reference proteome</keyword>
<organism>
    <name type="scientific">Xanthomonas oryzae pv. oryzae (strain KACC10331 / KXO85)</name>
    <dbReference type="NCBI Taxonomy" id="291331"/>
    <lineage>
        <taxon>Bacteria</taxon>
        <taxon>Pseudomonadati</taxon>
        <taxon>Pseudomonadota</taxon>
        <taxon>Gammaproteobacteria</taxon>
        <taxon>Lysobacterales</taxon>
        <taxon>Lysobacteraceae</taxon>
        <taxon>Xanthomonas</taxon>
    </lineage>
</organism>
<comment type="function">
    <text evidence="1">Catalyzes the attachment of glutamate to tRNA(Glu) in a two-step reaction: glutamate is first activated by ATP to form Glu-AMP and then transferred to the acceptor end of tRNA(Glu).</text>
</comment>
<comment type="catalytic activity">
    <reaction evidence="1">
        <text>tRNA(Glu) + L-glutamate + ATP = L-glutamyl-tRNA(Glu) + AMP + diphosphate</text>
        <dbReference type="Rhea" id="RHEA:23540"/>
        <dbReference type="Rhea" id="RHEA-COMP:9663"/>
        <dbReference type="Rhea" id="RHEA-COMP:9680"/>
        <dbReference type="ChEBI" id="CHEBI:29985"/>
        <dbReference type="ChEBI" id="CHEBI:30616"/>
        <dbReference type="ChEBI" id="CHEBI:33019"/>
        <dbReference type="ChEBI" id="CHEBI:78442"/>
        <dbReference type="ChEBI" id="CHEBI:78520"/>
        <dbReference type="ChEBI" id="CHEBI:456215"/>
        <dbReference type="EC" id="6.1.1.17"/>
    </reaction>
</comment>
<comment type="subunit">
    <text evidence="1">Monomer.</text>
</comment>
<comment type="subcellular location">
    <subcellularLocation>
        <location evidence="1">Cytoplasm</location>
    </subcellularLocation>
</comment>
<comment type="similarity">
    <text evidence="1">Belongs to the class-I aminoacyl-tRNA synthetase family. Glutamate--tRNA ligase type 1 subfamily.</text>
</comment>
<accession>Q5H2R3</accession>
<reference key="1">
    <citation type="journal article" date="2005" name="Nucleic Acids Res.">
        <title>The genome sequence of Xanthomonas oryzae pathovar oryzae KACC10331, the bacterial blight pathogen of rice.</title>
        <authorList>
            <person name="Lee B.-M."/>
            <person name="Park Y.-J."/>
            <person name="Park D.-S."/>
            <person name="Kang H.-W."/>
            <person name="Kim J.-G."/>
            <person name="Song E.-S."/>
            <person name="Park I.-C."/>
            <person name="Yoon U.-H."/>
            <person name="Hahn J.-H."/>
            <person name="Koo B.-S."/>
            <person name="Lee G.-B."/>
            <person name="Kim H."/>
            <person name="Park H.-S."/>
            <person name="Yoon K.-O."/>
            <person name="Kim J.-H."/>
            <person name="Jung C.-H."/>
            <person name="Koh N.-H."/>
            <person name="Seo J.-S."/>
            <person name="Go S.-J."/>
        </authorList>
    </citation>
    <scope>NUCLEOTIDE SEQUENCE [LARGE SCALE GENOMIC DNA]</scope>
    <source>
        <strain>KACC10331 / KXO85</strain>
    </source>
</reference>
<dbReference type="EC" id="6.1.1.17" evidence="1"/>
<dbReference type="EMBL" id="AE013598">
    <property type="protein sequence ID" value="AAW74758.1"/>
    <property type="molecule type" value="Genomic_DNA"/>
</dbReference>
<dbReference type="PDB" id="5H4V">
    <property type="method" value="X-ray"/>
    <property type="resolution" value="3.00 A"/>
    <property type="chains" value="A/B/C/D/E/F=1-467"/>
</dbReference>
<dbReference type="PDBsum" id="5H4V"/>
<dbReference type="SMR" id="Q5H2R3"/>
<dbReference type="STRING" id="291331.XOO1504"/>
<dbReference type="KEGG" id="xoo:XOO1504"/>
<dbReference type="HOGENOM" id="CLU_015768_6_3_6"/>
<dbReference type="Proteomes" id="UP000006735">
    <property type="component" value="Chromosome"/>
</dbReference>
<dbReference type="GO" id="GO:0005829">
    <property type="term" value="C:cytosol"/>
    <property type="evidence" value="ECO:0007669"/>
    <property type="project" value="TreeGrafter"/>
</dbReference>
<dbReference type="GO" id="GO:0005524">
    <property type="term" value="F:ATP binding"/>
    <property type="evidence" value="ECO:0007669"/>
    <property type="project" value="UniProtKB-UniRule"/>
</dbReference>
<dbReference type="GO" id="GO:0004818">
    <property type="term" value="F:glutamate-tRNA ligase activity"/>
    <property type="evidence" value="ECO:0007669"/>
    <property type="project" value="UniProtKB-UniRule"/>
</dbReference>
<dbReference type="GO" id="GO:0000049">
    <property type="term" value="F:tRNA binding"/>
    <property type="evidence" value="ECO:0007669"/>
    <property type="project" value="InterPro"/>
</dbReference>
<dbReference type="GO" id="GO:0008270">
    <property type="term" value="F:zinc ion binding"/>
    <property type="evidence" value="ECO:0007669"/>
    <property type="project" value="InterPro"/>
</dbReference>
<dbReference type="GO" id="GO:0006424">
    <property type="term" value="P:glutamyl-tRNA aminoacylation"/>
    <property type="evidence" value="ECO:0007669"/>
    <property type="project" value="UniProtKB-UniRule"/>
</dbReference>
<dbReference type="CDD" id="cd00808">
    <property type="entry name" value="GluRS_core"/>
    <property type="match status" value="1"/>
</dbReference>
<dbReference type="FunFam" id="3.40.50.620:FF:000007">
    <property type="entry name" value="Glutamate--tRNA ligase"/>
    <property type="match status" value="1"/>
</dbReference>
<dbReference type="Gene3D" id="1.10.10.350">
    <property type="match status" value="1"/>
</dbReference>
<dbReference type="Gene3D" id="3.40.50.620">
    <property type="entry name" value="HUPs"/>
    <property type="match status" value="1"/>
</dbReference>
<dbReference type="HAMAP" id="MF_00022">
    <property type="entry name" value="Glu_tRNA_synth_type1"/>
    <property type="match status" value="1"/>
</dbReference>
<dbReference type="InterPro" id="IPR045462">
    <property type="entry name" value="aa-tRNA-synth_I_cd-bd"/>
</dbReference>
<dbReference type="InterPro" id="IPR020751">
    <property type="entry name" value="aa-tRNA-synth_I_codon-bd_sub2"/>
</dbReference>
<dbReference type="InterPro" id="IPR001412">
    <property type="entry name" value="aa-tRNA-synth_I_CS"/>
</dbReference>
<dbReference type="InterPro" id="IPR008925">
    <property type="entry name" value="aa_tRNA-synth_I_cd-bd_sf"/>
</dbReference>
<dbReference type="InterPro" id="IPR004527">
    <property type="entry name" value="Glu-tRNA-ligase_bac/mito"/>
</dbReference>
<dbReference type="InterPro" id="IPR000924">
    <property type="entry name" value="Glu/Gln-tRNA-synth"/>
</dbReference>
<dbReference type="InterPro" id="IPR020058">
    <property type="entry name" value="Glu/Gln-tRNA-synth_Ib_cat-dom"/>
</dbReference>
<dbReference type="InterPro" id="IPR049940">
    <property type="entry name" value="GluQ/Sye"/>
</dbReference>
<dbReference type="InterPro" id="IPR033910">
    <property type="entry name" value="GluRS_core"/>
</dbReference>
<dbReference type="InterPro" id="IPR014729">
    <property type="entry name" value="Rossmann-like_a/b/a_fold"/>
</dbReference>
<dbReference type="NCBIfam" id="TIGR00464">
    <property type="entry name" value="gltX_bact"/>
    <property type="match status" value="1"/>
</dbReference>
<dbReference type="PANTHER" id="PTHR43311">
    <property type="entry name" value="GLUTAMATE--TRNA LIGASE"/>
    <property type="match status" value="1"/>
</dbReference>
<dbReference type="PANTHER" id="PTHR43311:SF2">
    <property type="entry name" value="GLUTAMATE--TRNA LIGASE, MITOCHONDRIAL-RELATED"/>
    <property type="match status" value="1"/>
</dbReference>
<dbReference type="Pfam" id="PF19269">
    <property type="entry name" value="Anticodon_2"/>
    <property type="match status" value="1"/>
</dbReference>
<dbReference type="Pfam" id="PF00749">
    <property type="entry name" value="tRNA-synt_1c"/>
    <property type="match status" value="1"/>
</dbReference>
<dbReference type="PRINTS" id="PR00987">
    <property type="entry name" value="TRNASYNTHGLU"/>
</dbReference>
<dbReference type="SUPFAM" id="SSF48163">
    <property type="entry name" value="An anticodon-binding domain of class I aminoacyl-tRNA synthetases"/>
    <property type="match status" value="1"/>
</dbReference>
<dbReference type="SUPFAM" id="SSF52374">
    <property type="entry name" value="Nucleotidylyl transferase"/>
    <property type="match status" value="1"/>
</dbReference>
<dbReference type="PROSITE" id="PS00178">
    <property type="entry name" value="AA_TRNA_LIGASE_I"/>
    <property type="match status" value="1"/>
</dbReference>
<sequence length="467" mass="51649">MACRTRFAPSPTGYLHIGGARTALYCWLEARRRGGQFVLRIEDTDRQRSTQAAIDAILEAMQWLGLGYDEGPIYQTQRVARYQEVAEQLLAQGKAYYAYETREELDAMREAAMAKQEKPRYDGAAREQNLPYRDDPNRVIRFKNPIGGTVVFDDLIKGRIEIANSELDDMVIFRPDGLPTYNFAVVVDDWDMGITEVIRGDDHINNTPRQINIYAALGAPVPKFAHMPMILDEQGTKLSKRTGAADVMQYKDAGYLPHALINYLARLGWSHGDQELFTPQELLDLFDVKDVNSKAARLDMAKLGWVNQHYLKTDDPASIAPQLEYQLAKLGVDLAAGPAAADVVVALRERVHTLKEMAEKAVVWYQPLETYDAAAVMKHLKLGAEVPLGKARELLAAVDQWSVDSVSAALHDAAAALELGMGKVAQPLRVAITGTQVSPDISQTVYLAGREGALKRIDAALTKIGAA</sequence>
<protein>
    <recommendedName>
        <fullName evidence="1">Glutamate--tRNA ligase</fullName>
        <ecNumber evidence="1">6.1.1.17</ecNumber>
    </recommendedName>
    <alternativeName>
        <fullName evidence="1">Glutamyl-tRNA synthetase</fullName>
        <shortName evidence="1">GluRS</shortName>
    </alternativeName>
</protein>
<gene>
    <name evidence="1" type="primary">gltX</name>
    <name type="ordered locus">XOO1504</name>
</gene>
<evidence type="ECO:0000255" key="1">
    <source>
        <dbReference type="HAMAP-Rule" id="MF_00022"/>
    </source>
</evidence>
<evidence type="ECO:0007829" key="2">
    <source>
        <dbReference type="PDB" id="5H4V"/>
    </source>
</evidence>
<feature type="chain" id="PRO_0000119705" description="Glutamate--tRNA ligase">
    <location>
        <begin position="1"/>
        <end position="467"/>
    </location>
</feature>
<feature type="short sequence motif" description="'HIGH' region" evidence="1">
    <location>
        <begin position="9"/>
        <end position="19"/>
    </location>
</feature>
<feature type="short sequence motif" description="'KMSKS' region" evidence="1">
    <location>
        <begin position="237"/>
        <end position="241"/>
    </location>
</feature>
<feature type="binding site" evidence="1">
    <location>
        <position position="240"/>
    </location>
    <ligand>
        <name>ATP</name>
        <dbReference type="ChEBI" id="CHEBI:30616"/>
    </ligand>
</feature>
<feature type="strand" evidence="2">
    <location>
        <begin position="4"/>
        <end position="7"/>
    </location>
</feature>
<feature type="helix" evidence="2">
    <location>
        <begin position="17"/>
        <end position="32"/>
    </location>
</feature>
<feature type="strand" evidence="2">
    <location>
        <begin position="36"/>
        <end position="41"/>
    </location>
</feature>
<feature type="strand" evidence="2">
    <location>
        <begin position="46"/>
        <end position="49"/>
    </location>
</feature>
<feature type="helix" evidence="2">
    <location>
        <begin position="51"/>
        <end position="64"/>
    </location>
</feature>
<feature type="strand" evidence="2">
    <location>
        <begin position="69"/>
        <end position="74"/>
    </location>
</feature>
<feature type="helix" evidence="2">
    <location>
        <begin position="75"/>
        <end position="78"/>
    </location>
</feature>
<feature type="helix" evidence="2">
    <location>
        <begin position="79"/>
        <end position="91"/>
    </location>
</feature>
<feature type="strand" evidence="2">
    <location>
        <begin position="94"/>
        <end position="98"/>
    </location>
</feature>
<feature type="helix" evidence="2">
    <location>
        <begin position="102"/>
        <end position="113"/>
    </location>
</feature>
<feature type="turn" evidence="2">
    <location>
        <begin position="114"/>
        <end position="116"/>
    </location>
</feature>
<feature type="strand" evidence="2">
    <location>
        <begin position="139"/>
        <end position="142"/>
    </location>
</feature>
<feature type="strand" evidence="2">
    <location>
        <begin position="146"/>
        <end position="154"/>
    </location>
</feature>
<feature type="turn" evidence="2">
    <location>
        <begin position="155"/>
        <end position="157"/>
    </location>
</feature>
<feature type="strand" evidence="2">
    <location>
        <begin position="158"/>
        <end position="164"/>
    </location>
</feature>
<feature type="strand" evidence="2">
    <location>
        <begin position="171"/>
        <end position="173"/>
    </location>
</feature>
<feature type="helix" evidence="2">
    <location>
        <begin position="181"/>
        <end position="191"/>
    </location>
</feature>
<feature type="strand" evidence="2">
    <location>
        <begin position="196"/>
        <end position="200"/>
    </location>
</feature>
<feature type="turn" evidence="2">
    <location>
        <begin position="201"/>
        <end position="206"/>
    </location>
</feature>
<feature type="helix" evidence="2">
    <location>
        <begin position="207"/>
        <end position="217"/>
    </location>
</feature>
<feature type="strand" evidence="2">
    <location>
        <begin position="223"/>
        <end position="227"/>
    </location>
</feature>
<feature type="strand" evidence="2">
    <location>
        <begin position="233"/>
        <end position="237"/>
    </location>
</feature>
<feature type="strand" evidence="2">
    <location>
        <begin position="240"/>
        <end position="242"/>
    </location>
</feature>
<feature type="helix" evidence="2">
    <location>
        <begin position="247"/>
        <end position="253"/>
    </location>
</feature>
<feature type="helix" evidence="2">
    <location>
        <begin position="257"/>
        <end position="265"/>
    </location>
</feature>
<feature type="turn" evidence="2">
    <location>
        <begin position="266"/>
        <end position="268"/>
    </location>
</feature>
<feature type="helix" evidence="2">
    <location>
        <begin position="279"/>
        <end position="285"/>
    </location>
</feature>
<feature type="helix" evidence="2">
    <location>
        <begin position="300"/>
        <end position="313"/>
    </location>
</feature>
<feature type="helix" evidence="2">
    <location>
        <begin position="316"/>
        <end position="329"/>
    </location>
</feature>
<feature type="helix" evidence="2">
    <location>
        <begin position="340"/>
        <end position="347"/>
    </location>
</feature>
<feature type="turn" evidence="2">
    <location>
        <begin position="348"/>
        <end position="350"/>
    </location>
</feature>
<feature type="helix" evidence="2">
    <location>
        <begin position="354"/>
        <end position="365"/>
    </location>
</feature>
<feature type="helix" evidence="2">
    <location>
        <begin position="373"/>
        <end position="376"/>
    </location>
</feature>
<feature type="helix" evidence="2">
    <location>
        <begin position="385"/>
        <end position="395"/>
    </location>
</feature>
<feature type="helix" evidence="2">
    <location>
        <begin position="405"/>
        <end position="416"/>
    </location>
</feature>
<feature type="helix" evidence="2">
    <location>
        <begin position="421"/>
        <end position="433"/>
    </location>
</feature>
<feature type="strand" evidence="2">
    <location>
        <begin position="434"/>
        <end position="436"/>
    </location>
</feature>
<feature type="helix" evidence="2">
    <location>
        <begin position="441"/>
        <end position="447"/>
    </location>
</feature>
<feature type="helix" evidence="2">
    <location>
        <begin position="449"/>
        <end position="464"/>
    </location>
</feature>
<proteinExistence type="evidence at protein level"/>